<keyword id="KW-1185">Reference proteome</keyword>
<reference key="1">
    <citation type="journal article" date="2006" name="J. Virol.">
        <title>Genome of invertebrate iridescent virus type 3 (mosquito iridescent virus).</title>
        <authorList>
            <person name="Delhon G."/>
            <person name="Tulman E.R."/>
            <person name="Afonso C.L."/>
            <person name="Lu Z."/>
            <person name="Becnel J.J."/>
            <person name="Moser B.A."/>
            <person name="Kutish G.F."/>
            <person name="Rock D.L."/>
        </authorList>
    </citation>
    <scope>NUCLEOTIDE SEQUENCE [LARGE SCALE GENOMIC DNA]</scope>
</reference>
<organism>
    <name type="scientific">Invertebrate iridescent virus 3</name>
    <name type="common">IIV-3</name>
    <name type="synonym">Mosquito iridescent virus</name>
    <dbReference type="NCBI Taxonomy" id="345201"/>
    <lineage>
        <taxon>Viruses</taxon>
        <taxon>Varidnaviria</taxon>
        <taxon>Bamfordvirae</taxon>
        <taxon>Nucleocytoviricota</taxon>
        <taxon>Megaviricetes</taxon>
        <taxon>Pimascovirales</taxon>
        <taxon>Iridoviridae</taxon>
        <taxon>Betairidovirinae</taxon>
        <taxon>Chloriridovirus</taxon>
    </lineage>
</organism>
<dbReference type="EMBL" id="DQ643392">
    <property type="protein sequence ID" value="ABF82038.1"/>
    <property type="molecule type" value="Genomic_DNA"/>
</dbReference>
<dbReference type="RefSeq" id="YP_654580.1">
    <property type="nucleotide sequence ID" value="NC_008187.1"/>
</dbReference>
<dbReference type="KEGG" id="vg:4156257"/>
<dbReference type="Proteomes" id="UP000001358">
    <property type="component" value="Genome"/>
</dbReference>
<dbReference type="InterPro" id="IPR045571">
    <property type="entry name" value="DUF5907"/>
</dbReference>
<dbReference type="Pfam" id="PF19264">
    <property type="entry name" value="DUF5907"/>
    <property type="match status" value="1"/>
</dbReference>
<accession>Q197F2</accession>
<gene>
    <name type="ORF">IIV3-008L</name>
</gene>
<proteinExistence type="predicted"/>
<feature type="chain" id="PRO_0000377800" description="Uncharacterized protein 008L">
    <location>
        <begin position="1"/>
        <end position="347"/>
    </location>
</feature>
<protein>
    <recommendedName>
        <fullName>Uncharacterized protein 008L</fullName>
    </recommendedName>
</protein>
<sequence length="347" mass="37905">MSFKVYDPIAELIATQFPTSNPDLQIINNDVLVVSPHKITLPMGPQNAGDVTNKAYVDQAVMSAAVPVASSTTVGTIQMAGDLEGSSGTNPIIAANKITLNKLQKIGPKMVIGNPNSDWNNTQEIELDSSFRIVDNRLNAGIVPISSTDPNKSNTVIPAPQQNGLFYLDSSGRVWVWAEHYYKCITPSRYISKWMGVGDFQELTVGQSVMWDSGRPSIETVSTQGLEVEWISSTNFTLSSLYLIPIVVKVTICIPLLGQPDQMAKFVLYSVSSAQQPRTGIVLTTDSSRSSAPIVSEYITVNWFEPKSYSVQLKEVNSDSGTTVTICSDKWLANPFLDCWITIEEVG</sequence>
<name>008L_IIV3</name>
<organismHost>
    <name type="scientific">Aedes vexans</name>
    <name type="common">Inland floodwater mosquito</name>
    <name type="synonym">Culex vexans</name>
    <dbReference type="NCBI Taxonomy" id="7163"/>
</organismHost>
<organismHost>
    <name type="scientific">Culex territans</name>
    <dbReference type="NCBI Taxonomy" id="42431"/>
</organismHost>
<organismHost>
    <name type="scientific">Culiseta annulata</name>
    <dbReference type="NCBI Taxonomy" id="332058"/>
</organismHost>
<organismHost>
    <name type="scientific">Ochlerotatus sollicitans</name>
    <name type="common">eastern saltmarsh mosquito</name>
    <dbReference type="NCBI Taxonomy" id="310513"/>
</organismHost>
<organismHost>
    <name type="scientific">Ochlerotatus taeniorhynchus</name>
    <name type="common">Black salt marsh mosquito</name>
    <name type="synonym">Aedes taeniorhynchus</name>
    <dbReference type="NCBI Taxonomy" id="329105"/>
</organismHost>
<organismHost>
    <name type="scientific">Psorophora ferox</name>
    <dbReference type="NCBI Taxonomy" id="7183"/>
</organismHost>